<comment type="function">
    <text evidence="1">Catalyzes the transfer of the gamma-phosphate of ATP to D-galactose to form alpha-D-galactose-1-phosphate (Gal-1-P).</text>
</comment>
<comment type="catalytic activity">
    <reaction evidence="1">
        <text>alpha-D-galactose + ATP = alpha-D-galactose 1-phosphate + ADP + H(+)</text>
        <dbReference type="Rhea" id="RHEA:13553"/>
        <dbReference type="ChEBI" id="CHEBI:15378"/>
        <dbReference type="ChEBI" id="CHEBI:28061"/>
        <dbReference type="ChEBI" id="CHEBI:30616"/>
        <dbReference type="ChEBI" id="CHEBI:58336"/>
        <dbReference type="ChEBI" id="CHEBI:456216"/>
        <dbReference type="EC" id="2.7.1.6"/>
    </reaction>
</comment>
<comment type="pathway">
    <text evidence="1">Carbohydrate metabolism; galactose metabolism.</text>
</comment>
<comment type="subcellular location">
    <subcellularLocation>
        <location evidence="1">Cytoplasm</location>
    </subcellularLocation>
</comment>
<comment type="similarity">
    <text evidence="1">Belongs to the GHMP kinase family. GalK subfamily.</text>
</comment>
<accession>Q0TJU4</accession>
<proteinExistence type="inferred from homology"/>
<reference key="1">
    <citation type="journal article" date="2006" name="Mol. Microbiol.">
        <title>Role of pathogenicity island-associated integrases in the genome plasticity of uropathogenic Escherichia coli strain 536.</title>
        <authorList>
            <person name="Hochhut B."/>
            <person name="Wilde C."/>
            <person name="Balling G."/>
            <person name="Middendorf B."/>
            <person name="Dobrindt U."/>
            <person name="Brzuszkiewicz E."/>
            <person name="Gottschalk G."/>
            <person name="Carniel E."/>
            <person name="Hacker J."/>
        </authorList>
    </citation>
    <scope>NUCLEOTIDE SEQUENCE [LARGE SCALE GENOMIC DNA]</scope>
    <source>
        <strain>536 / UPEC</strain>
    </source>
</reference>
<keyword id="KW-0067">ATP-binding</keyword>
<keyword id="KW-0119">Carbohydrate metabolism</keyword>
<keyword id="KW-0963">Cytoplasm</keyword>
<keyword id="KW-0299">Galactose metabolism</keyword>
<keyword id="KW-0418">Kinase</keyword>
<keyword id="KW-0460">Magnesium</keyword>
<keyword id="KW-0479">Metal-binding</keyword>
<keyword id="KW-0547">Nucleotide-binding</keyword>
<keyword id="KW-0808">Transferase</keyword>
<name>GAL1_ECOL5</name>
<organism>
    <name type="scientific">Escherichia coli O6:K15:H31 (strain 536 / UPEC)</name>
    <dbReference type="NCBI Taxonomy" id="362663"/>
    <lineage>
        <taxon>Bacteria</taxon>
        <taxon>Pseudomonadati</taxon>
        <taxon>Pseudomonadota</taxon>
        <taxon>Gammaproteobacteria</taxon>
        <taxon>Enterobacterales</taxon>
        <taxon>Enterobacteriaceae</taxon>
        <taxon>Escherichia</taxon>
    </lineage>
</organism>
<sequence>MSLKEKTQSLFANAFGYPATHTIQAPGRVNLIGEHTDYNDGFVLPCAIDYQTVISCAPRDDRKVRVMAADYENQLDEFSLDAPIVAHENYQWANYVRGVVKHLQLRNNSFGGVDMVISGNVPQGAGLSSSASLEVAVGTVLQQLYHLPLDGAQIALNGQEAENQFVGCNCGIMDQLISALGKKDHALLIDCRSLGTKAVSMPKGVAVVIINSNFKRTLVGSEYNTRREQCETGARFFQQPALRDVTIEEFNAVAHELDPIVAKRVRHILTENARTVEAASALEQGDLKRMGELMAESHASMRDDFEITVPQIDTLVEIVKAVIGDKGGVRMTGGGFGGCIVALFPEELVPAVQQAVAEQYEAKTGIKETFYVCKPSQGAGQC</sequence>
<gene>
    <name evidence="1" type="primary">galK</name>
    <name type="ordered locus">ECP_0768</name>
</gene>
<evidence type="ECO:0000255" key="1">
    <source>
        <dbReference type="HAMAP-Rule" id="MF_00246"/>
    </source>
</evidence>
<feature type="chain" id="PRO_1000005749" description="Galactokinase">
    <location>
        <begin position="1"/>
        <end position="382"/>
    </location>
</feature>
<feature type="active site" description="Proton acceptor" evidence="1">
    <location>
        <position position="174"/>
    </location>
</feature>
<feature type="binding site" evidence="1">
    <location>
        <begin position="34"/>
        <end position="37"/>
    </location>
    <ligand>
        <name>substrate</name>
    </ligand>
</feature>
<feature type="binding site" evidence="1">
    <location>
        <begin position="124"/>
        <end position="130"/>
    </location>
    <ligand>
        <name>ATP</name>
        <dbReference type="ChEBI" id="CHEBI:30616"/>
    </ligand>
</feature>
<feature type="binding site" evidence="1">
    <location>
        <position position="130"/>
    </location>
    <ligand>
        <name>Mg(2+)</name>
        <dbReference type="ChEBI" id="CHEBI:18420"/>
    </ligand>
</feature>
<feature type="binding site" evidence="1">
    <location>
        <position position="162"/>
    </location>
    <ligand>
        <name>Mg(2+)</name>
        <dbReference type="ChEBI" id="CHEBI:18420"/>
    </ligand>
</feature>
<feature type="binding site" evidence="1">
    <location>
        <position position="223"/>
    </location>
    <ligand>
        <name>substrate</name>
    </ligand>
</feature>
<feature type="site" description="Transition state stabilizer" evidence="1">
    <location>
        <position position="28"/>
    </location>
</feature>
<dbReference type="EC" id="2.7.1.6" evidence="1"/>
<dbReference type="EMBL" id="CP000247">
    <property type="protein sequence ID" value="ABG68787.1"/>
    <property type="molecule type" value="Genomic_DNA"/>
</dbReference>
<dbReference type="RefSeq" id="WP_000053414.1">
    <property type="nucleotide sequence ID" value="NC_008253.1"/>
</dbReference>
<dbReference type="SMR" id="Q0TJU4"/>
<dbReference type="KEGG" id="ecp:ECP_0768"/>
<dbReference type="HOGENOM" id="CLU_017814_2_1_6"/>
<dbReference type="UniPathway" id="UPA00214"/>
<dbReference type="Proteomes" id="UP000009182">
    <property type="component" value="Chromosome"/>
</dbReference>
<dbReference type="GO" id="GO:0005829">
    <property type="term" value="C:cytosol"/>
    <property type="evidence" value="ECO:0007669"/>
    <property type="project" value="TreeGrafter"/>
</dbReference>
<dbReference type="GO" id="GO:0005524">
    <property type="term" value="F:ATP binding"/>
    <property type="evidence" value="ECO:0007669"/>
    <property type="project" value="UniProtKB-UniRule"/>
</dbReference>
<dbReference type="GO" id="GO:0004335">
    <property type="term" value="F:galactokinase activity"/>
    <property type="evidence" value="ECO:0007669"/>
    <property type="project" value="UniProtKB-UniRule"/>
</dbReference>
<dbReference type="GO" id="GO:0000287">
    <property type="term" value="F:magnesium ion binding"/>
    <property type="evidence" value="ECO:0007669"/>
    <property type="project" value="UniProtKB-UniRule"/>
</dbReference>
<dbReference type="GO" id="GO:0006012">
    <property type="term" value="P:galactose metabolic process"/>
    <property type="evidence" value="ECO:0007669"/>
    <property type="project" value="UniProtKB-UniRule"/>
</dbReference>
<dbReference type="FunFam" id="3.30.230.10:FF:000017">
    <property type="entry name" value="Galactokinase"/>
    <property type="match status" value="1"/>
</dbReference>
<dbReference type="FunFam" id="3.30.70.890:FF:000001">
    <property type="entry name" value="Galactokinase"/>
    <property type="match status" value="1"/>
</dbReference>
<dbReference type="Gene3D" id="3.30.230.10">
    <property type="match status" value="1"/>
</dbReference>
<dbReference type="Gene3D" id="3.30.70.890">
    <property type="entry name" value="GHMP kinase, C-terminal domain"/>
    <property type="match status" value="1"/>
</dbReference>
<dbReference type="HAMAP" id="MF_00246">
    <property type="entry name" value="Galactokinase"/>
    <property type="match status" value="1"/>
</dbReference>
<dbReference type="InterPro" id="IPR000705">
    <property type="entry name" value="Galactokinase"/>
</dbReference>
<dbReference type="InterPro" id="IPR022963">
    <property type="entry name" value="Galactokinase_bac"/>
</dbReference>
<dbReference type="InterPro" id="IPR019741">
    <property type="entry name" value="Galactokinase_CS"/>
</dbReference>
<dbReference type="InterPro" id="IPR019539">
    <property type="entry name" value="GalKase_N"/>
</dbReference>
<dbReference type="InterPro" id="IPR013750">
    <property type="entry name" value="GHMP_kinase_C_dom"/>
</dbReference>
<dbReference type="InterPro" id="IPR036554">
    <property type="entry name" value="GHMP_kinase_C_sf"/>
</dbReference>
<dbReference type="InterPro" id="IPR006204">
    <property type="entry name" value="GHMP_kinase_N_dom"/>
</dbReference>
<dbReference type="InterPro" id="IPR006203">
    <property type="entry name" value="GHMP_knse_ATP-bd_CS"/>
</dbReference>
<dbReference type="InterPro" id="IPR006206">
    <property type="entry name" value="Mevalonate/galactokinase"/>
</dbReference>
<dbReference type="InterPro" id="IPR020568">
    <property type="entry name" value="Ribosomal_Su5_D2-typ_SF"/>
</dbReference>
<dbReference type="InterPro" id="IPR014721">
    <property type="entry name" value="Ribsml_uS5_D2-typ_fold_subgr"/>
</dbReference>
<dbReference type="NCBIfam" id="TIGR00131">
    <property type="entry name" value="gal_kin"/>
    <property type="match status" value="1"/>
</dbReference>
<dbReference type="NCBIfam" id="NF003472">
    <property type="entry name" value="PRK05101.1"/>
    <property type="match status" value="1"/>
</dbReference>
<dbReference type="PANTHER" id="PTHR10457:SF7">
    <property type="entry name" value="GALACTOKINASE-RELATED"/>
    <property type="match status" value="1"/>
</dbReference>
<dbReference type="PANTHER" id="PTHR10457">
    <property type="entry name" value="MEVALONATE KINASE/GALACTOKINASE"/>
    <property type="match status" value="1"/>
</dbReference>
<dbReference type="Pfam" id="PF10509">
    <property type="entry name" value="GalKase_gal_bdg"/>
    <property type="match status" value="1"/>
</dbReference>
<dbReference type="Pfam" id="PF08544">
    <property type="entry name" value="GHMP_kinases_C"/>
    <property type="match status" value="1"/>
</dbReference>
<dbReference type="Pfam" id="PF00288">
    <property type="entry name" value="GHMP_kinases_N"/>
    <property type="match status" value="1"/>
</dbReference>
<dbReference type="PIRSF" id="PIRSF000530">
    <property type="entry name" value="Galactokinase"/>
    <property type="match status" value="1"/>
</dbReference>
<dbReference type="PRINTS" id="PR00473">
    <property type="entry name" value="GALCTOKINASE"/>
</dbReference>
<dbReference type="PRINTS" id="PR00959">
    <property type="entry name" value="MEVGALKINASE"/>
</dbReference>
<dbReference type="SUPFAM" id="SSF55060">
    <property type="entry name" value="GHMP Kinase, C-terminal domain"/>
    <property type="match status" value="1"/>
</dbReference>
<dbReference type="SUPFAM" id="SSF54211">
    <property type="entry name" value="Ribosomal protein S5 domain 2-like"/>
    <property type="match status" value="1"/>
</dbReference>
<dbReference type="PROSITE" id="PS00106">
    <property type="entry name" value="GALACTOKINASE"/>
    <property type="match status" value="1"/>
</dbReference>
<dbReference type="PROSITE" id="PS00627">
    <property type="entry name" value="GHMP_KINASES_ATP"/>
    <property type="match status" value="1"/>
</dbReference>
<protein>
    <recommendedName>
        <fullName evidence="1">Galactokinase</fullName>
        <ecNumber evidence="1">2.7.1.6</ecNumber>
    </recommendedName>
    <alternativeName>
        <fullName evidence="1">Galactose kinase</fullName>
    </alternativeName>
</protein>